<sequence>MRFDLEPPSSVAAAHRTGVLLINLGTPDAPTPRAVRRYLAEFLSDPRVVEIPQVVWQVLLRTLILPLRGRASAKKYAAVWMPEGSPLRVYTERQTEGVRHLLASNAYQVTVDYAMRYGSPNIAQALAQFKRAGVERVLLMPMYPQYSASTTATAFDAAFAALARMRNQPEVRTVRQYADHPAYIHALAEQVRQYWAQHGRPDFAAGDKLVLSFHGVPKRTLDLGDPYHDQCQQTGALLMAALGLSTLECRVTFQSRFGKAEWLQPYTAPTLRELGAAGVRRADVFCPGFTADCLETIEEIGMEVRDEFIAGGGQAFHRIPCLNGAHAWIGALGEIVAENLQGWPVKAAQPDMVN</sequence>
<feature type="chain" id="PRO_1000019278" description="Ferrochelatase">
    <location>
        <begin position="1"/>
        <end position="354"/>
    </location>
</feature>
<feature type="binding site" evidence="1">
    <location>
        <position position="214"/>
    </location>
    <ligand>
        <name>Fe cation</name>
        <dbReference type="ChEBI" id="CHEBI:24875"/>
    </ligand>
</feature>
<feature type="binding site" evidence="1">
    <location>
        <position position="295"/>
    </location>
    <ligand>
        <name>Fe cation</name>
        <dbReference type="ChEBI" id="CHEBI:24875"/>
    </ligand>
</feature>
<keyword id="KW-0963">Cytoplasm</keyword>
<keyword id="KW-0350">Heme biosynthesis</keyword>
<keyword id="KW-0408">Iron</keyword>
<keyword id="KW-0456">Lyase</keyword>
<keyword id="KW-0479">Metal-binding</keyword>
<keyword id="KW-0627">Porphyrin biosynthesis</keyword>
<organism>
    <name type="scientific">Burkholderia ambifaria (strain ATCC BAA-244 / DSM 16087 / CCUG 44356 / LMG 19182 / AMMD)</name>
    <name type="common">Burkholderia cepacia (strain AMMD)</name>
    <dbReference type="NCBI Taxonomy" id="339670"/>
    <lineage>
        <taxon>Bacteria</taxon>
        <taxon>Pseudomonadati</taxon>
        <taxon>Pseudomonadota</taxon>
        <taxon>Betaproteobacteria</taxon>
        <taxon>Burkholderiales</taxon>
        <taxon>Burkholderiaceae</taxon>
        <taxon>Burkholderia</taxon>
        <taxon>Burkholderia cepacia complex</taxon>
    </lineage>
</organism>
<comment type="function">
    <text evidence="1">Catalyzes the ferrous insertion into protoporphyrin IX.</text>
</comment>
<comment type="catalytic activity">
    <reaction evidence="1">
        <text>heme b + 2 H(+) = protoporphyrin IX + Fe(2+)</text>
        <dbReference type="Rhea" id="RHEA:22584"/>
        <dbReference type="ChEBI" id="CHEBI:15378"/>
        <dbReference type="ChEBI" id="CHEBI:29033"/>
        <dbReference type="ChEBI" id="CHEBI:57306"/>
        <dbReference type="ChEBI" id="CHEBI:60344"/>
        <dbReference type="EC" id="4.98.1.1"/>
    </reaction>
</comment>
<comment type="pathway">
    <text evidence="1">Porphyrin-containing compound metabolism; protoheme biosynthesis; protoheme from protoporphyrin-IX: step 1/1.</text>
</comment>
<comment type="subcellular location">
    <subcellularLocation>
        <location evidence="1">Cytoplasm</location>
    </subcellularLocation>
</comment>
<comment type="similarity">
    <text evidence="1">Belongs to the ferrochelatase family.</text>
</comment>
<dbReference type="EC" id="4.98.1.1" evidence="1"/>
<dbReference type="EMBL" id="CP000440">
    <property type="protein sequence ID" value="ABI86199.1"/>
    <property type="molecule type" value="Genomic_DNA"/>
</dbReference>
<dbReference type="RefSeq" id="WP_011656034.1">
    <property type="nucleotide sequence ID" value="NC_008390.1"/>
</dbReference>
<dbReference type="SMR" id="Q0BI24"/>
<dbReference type="GeneID" id="93083948"/>
<dbReference type="KEGG" id="bam:Bamb_0640"/>
<dbReference type="PATRIC" id="fig|339670.21.peg.956"/>
<dbReference type="eggNOG" id="COG0276">
    <property type="taxonomic scope" value="Bacteria"/>
</dbReference>
<dbReference type="UniPathway" id="UPA00252">
    <property type="reaction ID" value="UER00325"/>
</dbReference>
<dbReference type="Proteomes" id="UP000000662">
    <property type="component" value="Chromosome 1"/>
</dbReference>
<dbReference type="GO" id="GO:0005737">
    <property type="term" value="C:cytoplasm"/>
    <property type="evidence" value="ECO:0007669"/>
    <property type="project" value="UniProtKB-SubCell"/>
</dbReference>
<dbReference type="GO" id="GO:0004325">
    <property type="term" value="F:ferrochelatase activity"/>
    <property type="evidence" value="ECO:0007669"/>
    <property type="project" value="UniProtKB-UniRule"/>
</dbReference>
<dbReference type="GO" id="GO:0046872">
    <property type="term" value="F:metal ion binding"/>
    <property type="evidence" value="ECO:0007669"/>
    <property type="project" value="UniProtKB-KW"/>
</dbReference>
<dbReference type="GO" id="GO:0006783">
    <property type="term" value="P:heme biosynthetic process"/>
    <property type="evidence" value="ECO:0007669"/>
    <property type="project" value="UniProtKB-UniRule"/>
</dbReference>
<dbReference type="CDD" id="cd00419">
    <property type="entry name" value="Ferrochelatase_C"/>
    <property type="match status" value="1"/>
</dbReference>
<dbReference type="CDD" id="cd03411">
    <property type="entry name" value="Ferrochelatase_N"/>
    <property type="match status" value="1"/>
</dbReference>
<dbReference type="FunFam" id="3.40.50.1400:FF:000002">
    <property type="entry name" value="Ferrochelatase"/>
    <property type="match status" value="1"/>
</dbReference>
<dbReference type="Gene3D" id="3.40.50.1400">
    <property type="match status" value="2"/>
</dbReference>
<dbReference type="HAMAP" id="MF_00323">
    <property type="entry name" value="Ferrochelatase"/>
    <property type="match status" value="1"/>
</dbReference>
<dbReference type="InterPro" id="IPR001015">
    <property type="entry name" value="Ferrochelatase"/>
</dbReference>
<dbReference type="InterPro" id="IPR019772">
    <property type="entry name" value="Ferrochelatase_AS"/>
</dbReference>
<dbReference type="InterPro" id="IPR033644">
    <property type="entry name" value="Ferrochelatase_C"/>
</dbReference>
<dbReference type="InterPro" id="IPR033659">
    <property type="entry name" value="Ferrochelatase_N"/>
</dbReference>
<dbReference type="NCBIfam" id="TIGR00109">
    <property type="entry name" value="hemH"/>
    <property type="match status" value="1"/>
</dbReference>
<dbReference type="PANTHER" id="PTHR11108">
    <property type="entry name" value="FERROCHELATASE"/>
    <property type="match status" value="1"/>
</dbReference>
<dbReference type="PANTHER" id="PTHR11108:SF1">
    <property type="entry name" value="FERROCHELATASE, MITOCHONDRIAL"/>
    <property type="match status" value="1"/>
</dbReference>
<dbReference type="Pfam" id="PF00762">
    <property type="entry name" value="Ferrochelatase"/>
    <property type="match status" value="1"/>
</dbReference>
<dbReference type="SUPFAM" id="SSF53800">
    <property type="entry name" value="Chelatase"/>
    <property type="match status" value="1"/>
</dbReference>
<dbReference type="PROSITE" id="PS00534">
    <property type="entry name" value="FERROCHELATASE"/>
    <property type="match status" value="1"/>
</dbReference>
<protein>
    <recommendedName>
        <fullName evidence="1">Ferrochelatase</fullName>
        <ecNumber evidence="1">4.98.1.1</ecNumber>
    </recommendedName>
    <alternativeName>
        <fullName evidence="1">Heme synthase</fullName>
    </alternativeName>
    <alternativeName>
        <fullName evidence="1">Protoheme ferro-lyase</fullName>
    </alternativeName>
</protein>
<reference key="1">
    <citation type="submission" date="2006-08" db="EMBL/GenBank/DDBJ databases">
        <title>Complete sequence of chromosome 1 of Burkholderia cepacia AMMD.</title>
        <authorList>
            <person name="Copeland A."/>
            <person name="Lucas S."/>
            <person name="Lapidus A."/>
            <person name="Barry K."/>
            <person name="Detter J.C."/>
            <person name="Glavina del Rio T."/>
            <person name="Hammon N."/>
            <person name="Israni S."/>
            <person name="Pitluck S."/>
            <person name="Bruce D."/>
            <person name="Chain P."/>
            <person name="Malfatti S."/>
            <person name="Shin M."/>
            <person name="Vergez L."/>
            <person name="Schmutz J."/>
            <person name="Larimer F."/>
            <person name="Land M."/>
            <person name="Hauser L."/>
            <person name="Kyrpides N."/>
            <person name="Kim E."/>
            <person name="Parke J."/>
            <person name="Coenye T."/>
            <person name="Konstantinidis K."/>
            <person name="Ramette A."/>
            <person name="Tiedje J."/>
            <person name="Richardson P."/>
        </authorList>
    </citation>
    <scope>NUCLEOTIDE SEQUENCE [LARGE SCALE GENOMIC DNA]</scope>
    <source>
        <strain>ATCC BAA-244 / DSM 16087 / CCUG 44356 / LMG 19182 / AMMD</strain>
    </source>
</reference>
<evidence type="ECO:0000255" key="1">
    <source>
        <dbReference type="HAMAP-Rule" id="MF_00323"/>
    </source>
</evidence>
<name>HEMH_BURCM</name>
<proteinExistence type="inferred from homology"/>
<accession>Q0BI24</accession>
<gene>
    <name evidence="1" type="primary">hemH</name>
    <name type="ordered locus">Bamb_0640</name>
</gene>